<accession>Q820J6</accession>
<proteinExistence type="inferred from homology"/>
<name>MIAA_NITEU</name>
<reference key="1">
    <citation type="journal article" date="2003" name="J. Bacteriol.">
        <title>Complete genome sequence of the ammonia-oxidizing bacterium and obligate chemolithoautotroph Nitrosomonas europaea.</title>
        <authorList>
            <person name="Chain P."/>
            <person name="Lamerdin J.E."/>
            <person name="Larimer F.W."/>
            <person name="Regala W."/>
            <person name="Lao V."/>
            <person name="Land M.L."/>
            <person name="Hauser L."/>
            <person name="Hooper A.B."/>
            <person name="Klotz M.G."/>
            <person name="Norton J."/>
            <person name="Sayavedra-Soto L.A."/>
            <person name="Arciero D.M."/>
            <person name="Hommes N.G."/>
            <person name="Whittaker M.M."/>
            <person name="Arp D.J."/>
        </authorList>
    </citation>
    <scope>NUCLEOTIDE SEQUENCE [LARGE SCALE GENOMIC DNA]</scope>
    <source>
        <strain>ATCC 19718 / CIP 103999 / KCTC 2705 / NBRC 14298</strain>
    </source>
</reference>
<dbReference type="EC" id="2.5.1.75" evidence="1"/>
<dbReference type="EMBL" id="AL954747">
    <property type="protein sequence ID" value="CAD85887.1"/>
    <property type="molecule type" value="Genomic_DNA"/>
</dbReference>
<dbReference type="RefSeq" id="WP_011112507.1">
    <property type="nucleotide sequence ID" value="NC_004757.1"/>
</dbReference>
<dbReference type="SMR" id="Q820J6"/>
<dbReference type="STRING" id="228410.NE1976"/>
<dbReference type="GeneID" id="87105131"/>
<dbReference type="KEGG" id="neu:NE1976"/>
<dbReference type="eggNOG" id="COG0324">
    <property type="taxonomic scope" value="Bacteria"/>
</dbReference>
<dbReference type="HOGENOM" id="CLU_032616_0_0_4"/>
<dbReference type="OrthoDB" id="9776390at2"/>
<dbReference type="PhylomeDB" id="Q820J6"/>
<dbReference type="Proteomes" id="UP000001416">
    <property type="component" value="Chromosome"/>
</dbReference>
<dbReference type="GO" id="GO:0005524">
    <property type="term" value="F:ATP binding"/>
    <property type="evidence" value="ECO:0007669"/>
    <property type="project" value="UniProtKB-UniRule"/>
</dbReference>
<dbReference type="GO" id="GO:0052381">
    <property type="term" value="F:tRNA dimethylallyltransferase activity"/>
    <property type="evidence" value="ECO:0007669"/>
    <property type="project" value="UniProtKB-UniRule"/>
</dbReference>
<dbReference type="GO" id="GO:0006400">
    <property type="term" value="P:tRNA modification"/>
    <property type="evidence" value="ECO:0007669"/>
    <property type="project" value="TreeGrafter"/>
</dbReference>
<dbReference type="FunFam" id="1.10.20.140:FF:000001">
    <property type="entry name" value="tRNA dimethylallyltransferase"/>
    <property type="match status" value="1"/>
</dbReference>
<dbReference type="Gene3D" id="1.10.20.140">
    <property type="match status" value="1"/>
</dbReference>
<dbReference type="Gene3D" id="3.40.50.300">
    <property type="entry name" value="P-loop containing nucleotide triphosphate hydrolases"/>
    <property type="match status" value="1"/>
</dbReference>
<dbReference type="HAMAP" id="MF_00185">
    <property type="entry name" value="IPP_trans"/>
    <property type="match status" value="1"/>
</dbReference>
<dbReference type="InterPro" id="IPR039657">
    <property type="entry name" value="Dimethylallyltransferase"/>
</dbReference>
<dbReference type="InterPro" id="IPR018022">
    <property type="entry name" value="IPT"/>
</dbReference>
<dbReference type="InterPro" id="IPR027417">
    <property type="entry name" value="P-loop_NTPase"/>
</dbReference>
<dbReference type="NCBIfam" id="TIGR00174">
    <property type="entry name" value="miaA"/>
    <property type="match status" value="1"/>
</dbReference>
<dbReference type="PANTHER" id="PTHR11088">
    <property type="entry name" value="TRNA DIMETHYLALLYLTRANSFERASE"/>
    <property type="match status" value="1"/>
</dbReference>
<dbReference type="PANTHER" id="PTHR11088:SF60">
    <property type="entry name" value="TRNA DIMETHYLALLYLTRANSFERASE"/>
    <property type="match status" value="1"/>
</dbReference>
<dbReference type="Pfam" id="PF01715">
    <property type="entry name" value="IPPT"/>
    <property type="match status" value="1"/>
</dbReference>
<dbReference type="SUPFAM" id="SSF52540">
    <property type="entry name" value="P-loop containing nucleoside triphosphate hydrolases"/>
    <property type="match status" value="1"/>
</dbReference>
<evidence type="ECO:0000255" key="1">
    <source>
        <dbReference type="HAMAP-Rule" id="MF_00185"/>
    </source>
</evidence>
<sequence>MNYPDIESPPAIFLMGPTASGKSAMALEIARRFPVEIIGVDSAQVYRFMDIGSAKPDKLILSEIPHHLIDLIDPDENYSAARFREDALSVMREITARGRVPLLVGGTMLYFKVLRQGLAALPPADDSVRRALEQQALDKGWPAMHAVLSQLDPVTAGRIQPNDSQRIQRALEVCYLTGKPMSEMLEQQQNADFPFRVFNIALLPGDRSVLHDRISQRFATMLEAGLIDEVRLIREQFHVNGDMPSMRCVGYRQVCMYLDNEISFARMQETGVFATRQLAKRQLTWLRSMSGLQIFDCLENRLARQIIDLIQAQRLFS</sequence>
<comment type="function">
    <text evidence="1">Catalyzes the transfer of a dimethylallyl group onto the adenine at position 37 in tRNAs that read codons beginning with uridine, leading to the formation of N6-(dimethylallyl)adenosine (i(6)A).</text>
</comment>
<comment type="catalytic activity">
    <reaction evidence="1">
        <text>adenosine(37) in tRNA + dimethylallyl diphosphate = N(6)-dimethylallyladenosine(37) in tRNA + diphosphate</text>
        <dbReference type="Rhea" id="RHEA:26482"/>
        <dbReference type="Rhea" id="RHEA-COMP:10162"/>
        <dbReference type="Rhea" id="RHEA-COMP:10375"/>
        <dbReference type="ChEBI" id="CHEBI:33019"/>
        <dbReference type="ChEBI" id="CHEBI:57623"/>
        <dbReference type="ChEBI" id="CHEBI:74411"/>
        <dbReference type="ChEBI" id="CHEBI:74415"/>
        <dbReference type="EC" id="2.5.1.75"/>
    </reaction>
</comment>
<comment type="cofactor">
    <cofactor evidence="1">
        <name>Mg(2+)</name>
        <dbReference type="ChEBI" id="CHEBI:18420"/>
    </cofactor>
</comment>
<comment type="subunit">
    <text evidence="1">Monomer.</text>
</comment>
<comment type="similarity">
    <text evidence="1">Belongs to the IPP transferase family.</text>
</comment>
<feature type="chain" id="PRO_0000163945" description="tRNA dimethylallyltransferase">
    <location>
        <begin position="1"/>
        <end position="317"/>
    </location>
</feature>
<feature type="region of interest" description="Interaction with substrate tRNA" evidence="1">
    <location>
        <begin position="41"/>
        <end position="44"/>
    </location>
</feature>
<feature type="region of interest" description="Interaction with substrate tRNA" evidence="1">
    <location>
        <begin position="165"/>
        <end position="169"/>
    </location>
</feature>
<feature type="region of interest" description="Interaction with substrate tRNA" evidence="1">
    <location>
        <begin position="247"/>
        <end position="252"/>
    </location>
</feature>
<feature type="binding site" evidence="1">
    <location>
        <begin position="16"/>
        <end position="23"/>
    </location>
    <ligand>
        <name>ATP</name>
        <dbReference type="ChEBI" id="CHEBI:30616"/>
    </ligand>
</feature>
<feature type="binding site" evidence="1">
    <location>
        <begin position="18"/>
        <end position="23"/>
    </location>
    <ligand>
        <name>substrate</name>
    </ligand>
</feature>
<feature type="site" description="Interaction with substrate tRNA" evidence="1">
    <location>
        <position position="107"/>
    </location>
</feature>
<feature type="site" description="Interaction with substrate tRNA" evidence="1">
    <location>
        <position position="129"/>
    </location>
</feature>
<keyword id="KW-0067">ATP-binding</keyword>
<keyword id="KW-0460">Magnesium</keyword>
<keyword id="KW-0547">Nucleotide-binding</keyword>
<keyword id="KW-1185">Reference proteome</keyword>
<keyword id="KW-0808">Transferase</keyword>
<keyword id="KW-0819">tRNA processing</keyword>
<protein>
    <recommendedName>
        <fullName evidence="1">tRNA dimethylallyltransferase</fullName>
        <ecNumber evidence="1">2.5.1.75</ecNumber>
    </recommendedName>
    <alternativeName>
        <fullName evidence="1">Dimethylallyl diphosphate:tRNA dimethylallyltransferase</fullName>
        <shortName evidence="1">DMAPP:tRNA dimethylallyltransferase</shortName>
        <shortName evidence="1">DMATase</shortName>
    </alternativeName>
    <alternativeName>
        <fullName evidence="1">Isopentenyl-diphosphate:tRNA isopentenyltransferase</fullName>
        <shortName evidence="1">IPP transferase</shortName>
        <shortName evidence="1">IPPT</shortName>
        <shortName evidence="1">IPTase</shortName>
    </alternativeName>
</protein>
<organism>
    <name type="scientific">Nitrosomonas europaea (strain ATCC 19718 / CIP 103999 / KCTC 2705 / NBRC 14298)</name>
    <dbReference type="NCBI Taxonomy" id="228410"/>
    <lineage>
        <taxon>Bacteria</taxon>
        <taxon>Pseudomonadati</taxon>
        <taxon>Pseudomonadota</taxon>
        <taxon>Betaproteobacteria</taxon>
        <taxon>Nitrosomonadales</taxon>
        <taxon>Nitrosomonadaceae</taxon>
        <taxon>Nitrosomonas</taxon>
    </lineage>
</organism>
<gene>
    <name evidence="1" type="primary">miaA</name>
    <name type="ordered locus">NE1976</name>
</gene>